<reference key="1">
    <citation type="submission" date="2008-05" db="EMBL/GenBank/DDBJ databases">
        <title>Complete sequence of Shigella boydii serotype 18 strain BS512.</title>
        <authorList>
            <person name="Rasko D.A."/>
            <person name="Rosovitz M."/>
            <person name="Maurelli A.T."/>
            <person name="Myers G."/>
            <person name="Seshadri R."/>
            <person name="Cer R."/>
            <person name="Jiang L."/>
            <person name="Ravel J."/>
            <person name="Sebastian Y."/>
        </authorList>
    </citation>
    <scope>NUCLEOTIDE SEQUENCE [LARGE SCALE GENOMIC DNA]</scope>
    <source>
        <strain>CDC 3083-94 / BS512</strain>
    </source>
</reference>
<sequence>MSNGIVIIGSGFAARQLVKNIRKQDATIPLTLIAADSMDEYNKPDLSHVISQGQRADDLTRQTAGEFAEQFNLHLFPQTWVTDIDAEARVVKSQNNQWQYDKLVLATGASAFVPPVPGRELMLTLNSQQEYRACETQLRDARRVLIVGGGLIGSELAMDFCRAGKAVTLIDNAASILASLMPPEVSSRLQHRLTEMGVHLLLKSQLQGLEKTDSGILATLDHQRSIEVDAVIAATGLRPETALARRAGLTINRGVCVDSYLQTSNDDIYALGDYAEINGQVLPFLQPIQLSAMVLAKNLLGNNTPLKLPTMLVKIKTPELPLHLAGETQRQDLRWQINTERQGMVARGVDDADQLRAFVVSEDRMKEAFGLLKTLPM</sequence>
<gene>
    <name evidence="1" type="primary">norW</name>
    <name evidence="1" type="synonym">flrR</name>
    <name type="ordered locus">SbBS512_E3166</name>
</gene>
<name>NORW_SHIB3</name>
<keyword id="KW-0963">Cytoplasm</keyword>
<keyword id="KW-0274">FAD</keyword>
<keyword id="KW-0285">Flavoprotein</keyword>
<keyword id="KW-0520">NAD</keyword>
<keyword id="KW-0560">Oxidoreductase</keyword>
<keyword id="KW-1185">Reference proteome</keyword>
<organism>
    <name type="scientific">Shigella boydii serotype 18 (strain CDC 3083-94 / BS512)</name>
    <dbReference type="NCBI Taxonomy" id="344609"/>
    <lineage>
        <taxon>Bacteria</taxon>
        <taxon>Pseudomonadati</taxon>
        <taxon>Pseudomonadota</taxon>
        <taxon>Gammaproteobacteria</taxon>
        <taxon>Enterobacterales</taxon>
        <taxon>Enterobacteriaceae</taxon>
        <taxon>Shigella</taxon>
    </lineage>
</organism>
<feature type="chain" id="PRO_1000141185" description="Nitric oxide reductase FlRd-NAD(+) reductase">
    <location>
        <begin position="1"/>
        <end position="377"/>
    </location>
</feature>
<accession>B2U036</accession>
<evidence type="ECO:0000255" key="1">
    <source>
        <dbReference type="HAMAP-Rule" id="MF_01313"/>
    </source>
</evidence>
<protein>
    <recommendedName>
        <fullName evidence="1">Nitric oxide reductase FlRd-NAD(+) reductase</fullName>
        <ecNumber evidence="1">1.18.1.-</ecNumber>
    </recommendedName>
    <alternativeName>
        <fullName evidence="1">Flavorubredoxin reductase</fullName>
        <shortName evidence="1">FlRd-reductase</shortName>
        <shortName evidence="1">FlavoRb reductase</shortName>
    </alternativeName>
</protein>
<proteinExistence type="inferred from homology"/>
<comment type="function">
    <text evidence="1">One of at least two accessory proteins for anaerobic nitric oxide (NO) reductase. Reduces the rubredoxin moiety of NO reductase.</text>
</comment>
<comment type="catalytic activity">
    <reaction evidence="1">
        <text>2 reduced [nitric oxide reductase rubredoxin domain] + NAD(+) + H(+) = 2 oxidized [nitric oxide reductase rubredoxin domain] + NADH</text>
        <dbReference type="Rhea" id="RHEA:42960"/>
        <dbReference type="Rhea" id="RHEA-COMP:10304"/>
        <dbReference type="Rhea" id="RHEA-COMP:10305"/>
        <dbReference type="ChEBI" id="CHEBI:15378"/>
        <dbReference type="ChEBI" id="CHEBI:29033"/>
        <dbReference type="ChEBI" id="CHEBI:29034"/>
        <dbReference type="ChEBI" id="CHEBI:57540"/>
        <dbReference type="ChEBI" id="CHEBI:57945"/>
    </reaction>
</comment>
<comment type="cofactor">
    <cofactor evidence="1">
        <name>FAD</name>
        <dbReference type="ChEBI" id="CHEBI:57692"/>
    </cofactor>
</comment>
<comment type="pathway">
    <text evidence="1">Nitrogen metabolism; nitric oxide reduction.</text>
</comment>
<comment type="subcellular location">
    <subcellularLocation>
        <location evidence="1">Cytoplasm</location>
    </subcellularLocation>
</comment>
<comment type="similarity">
    <text evidence="1">Belongs to the FAD-dependent oxidoreductase family.</text>
</comment>
<dbReference type="EC" id="1.18.1.-" evidence="1"/>
<dbReference type="EMBL" id="CP001063">
    <property type="protein sequence ID" value="ACD08329.1"/>
    <property type="molecule type" value="Genomic_DNA"/>
</dbReference>
<dbReference type="RefSeq" id="WP_000064747.1">
    <property type="nucleotide sequence ID" value="NC_010658.1"/>
</dbReference>
<dbReference type="SMR" id="B2U036"/>
<dbReference type="STRING" id="344609.SbBS512_E3166"/>
<dbReference type="KEGG" id="sbc:SbBS512_E3166"/>
<dbReference type="HOGENOM" id="CLU_003291_4_4_6"/>
<dbReference type="UniPathway" id="UPA00638"/>
<dbReference type="Proteomes" id="UP000001030">
    <property type="component" value="Chromosome"/>
</dbReference>
<dbReference type="GO" id="GO:0005737">
    <property type="term" value="C:cytoplasm"/>
    <property type="evidence" value="ECO:0007669"/>
    <property type="project" value="UniProtKB-SubCell"/>
</dbReference>
<dbReference type="GO" id="GO:0016731">
    <property type="term" value="F:oxidoreductase activity, acting on iron-sulfur proteins as donors, NAD or NADP as acceptor"/>
    <property type="evidence" value="ECO:0007669"/>
    <property type="project" value="UniProtKB-UniRule"/>
</dbReference>
<dbReference type="FunFam" id="3.30.390.120:FF:000001">
    <property type="entry name" value="Nitric oxide reductase FlRd-NAD(+) reductase"/>
    <property type="match status" value="1"/>
</dbReference>
<dbReference type="FunFam" id="3.50.50.60:FF:000075">
    <property type="entry name" value="Nitric oxide reductase FlRd-NAD(+) reductase"/>
    <property type="match status" value="1"/>
</dbReference>
<dbReference type="Gene3D" id="3.30.390.120">
    <property type="match status" value="1"/>
</dbReference>
<dbReference type="Gene3D" id="3.50.50.60">
    <property type="entry name" value="FAD/NAD(P)-binding domain"/>
    <property type="match status" value="2"/>
</dbReference>
<dbReference type="HAMAP" id="MF_01313">
    <property type="entry name" value="NorW"/>
    <property type="match status" value="1"/>
</dbReference>
<dbReference type="InterPro" id="IPR050260">
    <property type="entry name" value="FAD-bd_OxRdtase"/>
</dbReference>
<dbReference type="InterPro" id="IPR036188">
    <property type="entry name" value="FAD/NAD-bd_sf"/>
</dbReference>
<dbReference type="InterPro" id="IPR023753">
    <property type="entry name" value="FAD/NAD-binding_dom"/>
</dbReference>
<dbReference type="InterPro" id="IPR023961">
    <property type="entry name" value="NO_rdtase_NorW"/>
</dbReference>
<dbReference type="InterPro" id="IPR041364">
    <property type="entry name" value="Rbx-bd"/>
</dbReference>
<dbReference type="NCBIfam" id="NF003437">
    <property type="entry name" value="PRK04965.1"/>
    <property type="match status" value="1"/>
</dbReference>
<dbReference type="PANTHER" id="PTHR43429:SF3">
    <property type="entry name" value="NITRITE REDUCTASE [NAD(P)H]"/>
    <property type="match status" value="1"/>
</dbReference>
<dbReference type="PANTHER" id="PTHR43429">
    <property type="entry name" value="PYRIDINE NUCLEOTIDE-DISULFIDE OXIDOREDUCTASE DOMAIN-CONTAINING"/>
    <property type="match status" value="1"/>
</dbReference>
<dbReference type="Pfam" id="PF07992">
    <property type="entry name" value="Pyr_redox_2"/>
    <property type="match status" value="1"/>
</dbReference>
<dbReference type="Pfam" id="PF18113">
    <property type="entry name" value="Rbx_binding"/>
    <property type="match status" value="1"/>
</dbReference>
<dbReference type="PRINTS" id="PR00368">
    <property type="entry name" value="FADPNR"/>
</dbReference>
<dbReference type="PRINTS" id="PR00411">
    <property type="entry name" value="PNDRDTASEI"/>
</dbReference>
<dbReference type="SUPFAM" id="SSF51905">
    <property type="entry name" value="FAD/NAD(P)-binding domain"/>
    <property type="match status" value="1"/>
</dbReference>